<comment type="function">
    <text evidence="2 4">Bifunctional DNA N-glycosylase with associated apurinic/apyrimidinic (AP) lyase function that catalyzes the first step in base excision repair (BER), the primary repair pathway for the repair of oxidative DNA damage. The DNA N-glycosylase activity releases the damaged DNA base from DNA by cleaving the N-glycosidic bond, leaving an AP site. The AP lyase activity cleaves the phosphodiester bond 3' to the AP site by a beta-elimination. Primarily recognizes and repairs oxidative base damage of pyrimidines.</text>
</comment>
<comment type="catalytic activity">
    <reaction evidence="2">
        <text>2'-deoxyribonucleotide-(2'-deoxyribose 5'-phosphate)-2'-deoxyribonucleotide-DNA = a 3'-end 2'-deoxyribonucleotide-(2,3-dehydro-2,3-deoxyribose 5'-phosphate)-DNA + a 5'-end 5'-phospho-2'-deoxyribonucleoside-DNA + H(+)</text>
        <dbReference type="Rhea" id="RHEA:66592"/>
        <dbReference type="Rhea" id="RHEA-COMP:13180"/>
        <dbReference type="Rhea" id="RHEA-COMP:16897"/>
        <dbReference type="Rhea" id="RHEA-COMP:17067"/>
        <dbReference type="ChEBI" id="CHEBI:15378"/>
        <dbReference type="ChEBI" id="CHEBI:136412"/>
        <dbReference type="ChEBI" id="CHEBI:157695"/>
        <dbReference type="ChEBI" id="CHEBI:167181"/>
        <dbReference type="EC" id="4.2.99.18"/>
    </reaction>
</comment>
<comment type="cofactor">
    <cofactor evidence="2">
        <name>[4Fe-4S] cluster</name>
        <dbReference type="ChEBI" id="CHEBI:49883"/>
    </cofactor>
    <text evidence="2">Binds 1 [4Fe-4S] cluster. The cluster does not appear to play a role in catalysis, but is probably involved in the proper positioning of the enzyme along the DNA strand.</text>
</comment>
<comment type="subcellular location">
    <subcellularLocation>
        <location evidence="4">Plastid</location>
        <location evidence="4">Chloroplast stroma</location>
        <location evidence="4">Chloroplast nucleoid</location>
    </subcellularLocation>
</comment>
<comment type="alternative products">
    <event type="alternative splicing"/>
    <isoform>
        <id>B9DFZ0-1</id>
        <name>1</name>
        <sequence type="displayed"/>
    </isoform>
    <isoform>
        <id>B9DFZ0-2</id>
        <name>2</name>
        <sequence type="described" ref="VSP_053922 VSP_053923"/>
    </isoform>
</comment>
<comment type="disruption phenotype">
    <text evidence="4">No effect on chloroplastic glycosylase-lyase/endonuclease activity, probably due to function redundancy.</text>
</comment>
<comment type="similarity">
    <text evidence="2">Belongs to the Nth/MutY family.</text>
</comment>
<comment type="sequence caution" evidence="6">
    <conflict type="erroneous gene model prediction">
        <sequence resource="EMBL-CDS" id="AAF29397"/>
    </conflict>
</comment>
<evidence type="ECO:0000255" key="1"/>
<evidence type="ECO:0000255" key="2">
    <source>
        <dbReference type="HAMAP-Rule" id="MF_03183"/>
    </source>
</evidence>
<evidence type="ECO:0000256" key="3">
    <source>
        <dbReference type="SAM" id="MobiDB-lite"/>
    </source>
</evidence>
<evidence type="ECO:0000269" key="4">
    <source>
    </source>
</evidence>
<evidence type="ECO:0000303" key="5">
    <source>
    </source>
</evidence>
<evidence type="ECO:0000305" key="6"/>
<proteinExistence type="evidence at transcript level"/>
<dbReference type="EC" id="3.2.2.-" evidence="2"/>
<dbReference type="EC" id="4.2.99.18" evidence="2"/>
<dbReference type="EMBL" id="AC009999">
    <property type="protein sequence ID" value="AAF29397.1"/>
    <property type="status" value="ALT_SEQ"/>
    <property type="molecule type" value="Genomic_DNA"/>
</dbReference>
<dbReference type="EMBL" id="CP002684">
    <property type="protein sequence ID" value="AEE27915.1"/>
    <property type="molecule type" value="Genomic_DNA"/>
</dbReference>
<dbReference type="EMBL" id="CP002684">
    <property type="protein sequence ID" value="AEE27916.1"/>
    <property type="molecule type" value="Genomic_DNA"/>
</dbReference>
<dbReference type="EMBL" id="AF410268">
    <property type="protein sequence ID" value="AAK95254.1"/>
    <property type="molecule type" value="mRNA"/>
</dbReference>
<dbReference type="EMBL" id="AY143860">
    <property type="protein sequence ID" value="AAN28799.1"/>
    <property type="molecule type" value="mRNA"/>
</dbReference>
<dbReference type="EMBL" id="AK316958">
    <property type="protein sequence ID" value="BAH19657.1"/>
    <property type="molecule type" value="mRNA"/>
</dbReference>
<dbReference type="PIR" id="A86194">
    <property type="entry name" value="A86194"/>
</dbReference>
<dbReference type="RefSeq" id="NP_563752.1">
    <molecule id="B9DFZ0-2"/>
    <property type="nucleotide sequence ID" value="NM_100471.4"/>
</dbReference>
<dbReference type="RefSeq" id="NP_973767.1">
    <molecule id="B9DFZ0-1"/>
    <property type="nucleotide sequence ID" value="NM_202038.4"/>
</dbReference>
<dbReference type="SMR" id="B9DFZ0"/>
<dbReference type="FunCoup" id="B9DFZ0">
    <property type="interactions" value="2172"/>
</dbReference>
<dbReference type="STRING" id="3702.B9DFZ0"/>
<dbReference type="iPTMnet" id="B9DFZ0"/>
<dbReference type="PaxDb" id="3702-AT1G05900.2"/>
<dbReference type="ProteomicsDB" id="249172">
    <molecule id="B9DFZ0-1"/>
</dbReference>
<dbReference type="EnsemblPlants" id="AT1G05900.1">
    <molecule id="B9DFZ0-2"/>
    <property type="protein sequence ID" value="AT1G05900.1"/>
    <property type="gene ID" value="AT1G05900"/>
</dbReference>
<dbReference type="EnsemblPlants" id="AT1G05900.2">
    <molecule id="B9DFZ0-1"/>
    <property type="protein sequence ID" value="AT1G05900.2"/>
    <property type="gene ID" value="AT1G05900"/>
</dbReference>
<dbReference type="GeneID" id="837100"/>
<dbReference type="Gramene" id="AT1G05900.1">
    <molecule id="B9DFZ0-2"/>
    <property type="protein sequence ID" value="AT1G05900.1"/>
    <property type="gene ID" value="AT1G05900"/>
</dbReference>
<dbReference type="Gramene" id="AT1G05900.2">
    <molecule id="B9DFZ0-1"/>
    <property type="protein sequence ID" value="AT1G05900.2"/>
    <property type="gene ID" value="AT1G05900"/>
</dbReference>
<dbReference type="KEGG" id="ath:AT1G05900"/>
<dbReference type="Araport" id="AT1G05900"/>
<dbReference type="TAIR" id="AT1G05900">
    <property type="gene designation" value="NTH2"/>
</dbReference>
<dbReference type="eggNOG" id="KOG1921">
    <property type="taxonomic scope" value="Eukaryota"/>
</dbReference>
<dbReference type="HOGENOM" id="CLU_012862_4_0_1"/>
<dbReference type="InParanoid" id="B9DFZ0"/>
<dbReference type="OMA" id="MGCAEIP"/>
<dbReference type="OrthoDB" id="2099276at2759"/>
<dbReference type="PhylomeDB" id="B9DFZ0"/>
<dbReference type="PRO" id="PR:B9DFZ0"/>
<dbReference type="Proteomes" id="UP000006548">
    <property type="component" value="Chromosome 1"/>
</dbReference>
<dbReference type="ExpressionAtlas" id="B9DFZ0">
    <property type="expression patterns" value="baseline and differential"/>
</dbReference>
<dbReference type="GO" id="GO:0042644">
    <property type="term" value="C:chloroplast nucleoid"/>
    <property type="evidence" value="ECO:0000314"/>
    <property type="project" value="TAIR"/>
</dbReference>
<dbReference type="GO" id="GO:0005634">
    <property type="term" value="C:nucleus"/>
    <property type="evidence" value="ECO:0007669"/>
    <property type="project" value="InterPro"/>
</dbReference>
<dbReference type="GO" id="GO:0051539">
    <property type="term" value="F:4 iron, 4 sulfur cluster binding"/>
    <property type="evidence" value="ECO:0007669"/>
    <property type="project" value="UniProtKB-KW"/>
</dbReference>
<dbReference type="GO" id="GO:0140078">
    <property type="term" value="F:class I DNA-(apurinic or apyrimidinic site) endonuclease activity"/>
    <property type="evidence" value="ECO:0007669"/>
    <property type="project" value="UniProtKB-EC"/>
</dbReference>
<dbReference type="GO" id="GO:0003677">
    <property type="term" value="F:DNA binding"/>
    <property type="evidence" value="ECO:0007669"/>
    <property type="project" value="UniProtKB-UniRule"/>
</dbReference>
<dbReference type="GO" id="GO:0019104">
    <property type="term" value="F:DNA N-glycosylase activity"/>
    <property type="evidence" value="ECO:0000314"/>
    <property type="project" value="TAIR"/>
</dbReference>
<dbReference type="GO" id="GO:0003906">
    <property type="term" value="F:DNA-(apurinic or apyrimidinic site) endonuclease activity"/>
    <property type="evidence" value="ECO:0000314"/>
    <property type="project" value="UniProtKB"/>
</dbReference>
<dbReference type="GO" id="GO:0046872">
    <property type="term" value="F:metal ion binding"/>
    <property type="evidence" value="ECO:0007669"/>
    <property type="project" value="UniProtKB-KW"/>
</dbReference>
<dbReference type="GO" id="GO:0000703">
    <property type="term" value="F:oxidized pyrimidine nucleobase lesion DNA N-glycosylase activity"/>
    <property type="evidence" value="ECO:0007669"/>
    <property type="project" value="UniProtKB-UniRule"/>
</dbReference>
<dbReference type="GO" id="GO:0006284">
    <property type="term" value="P:base-excision repair"/>
    <property type="evidence" value="ECO:0000314"/>
    <property type="project" value="TAIR"/>
</dbReference>
<dbReference type="GO" id="GO:0006285">
    <property type="term" value="P:base-excision repair, AP site formation"/>
    <property type="evidence" value="ECO:0007669"/>
    <property type="project" value="UniProtKB-UniRule"/>
</dbReference>
<dbReference type="CDD" id="cd00056">
    <property type="entry name" value="ENDO3c"/>
    <property type="match status" value="1"/>
</dbReference>
<dbReference type="FunFam" id="1.10.1670.10:FF:000003">
    <property type="entry name" value="Endonuclease III homolog"/>
    <property type="match status" value="1"/>
</dbReference>
<dbReference type="FunFam" id="1.10.340.30:FF:000005">
    <property type="entry name" value="Endonuclease III-like protein 1"/>
    <property type="match status" value="1"/>
</dbReference>
<dbReference type="Gene3D" id="1.10.1670.10">
    <property type="entry name" value="Helix-hairpin-Helix base-excision DNA repair enzymes (C-terminal)"/>
    <property type="match status" value="1"/>
</dbReference>
<dbReference type="Gene3D" id="1.10.340.30">
    <property type="entry name" value="Hypothetical protein, domain 2"/>
    <property type="match status" value="1"/>
</dbReference>
<dbReference type="HAMAP" id="MF_03183">
    <property type="entry name" value="Endonuclease_III_Nth"/>
    <property type="match status" value="1"/>
</dbReference>
<dbReference type="InterPro" id="IPR011257">
    <property type="entry name" value="DNA_glycosylase"/>
</dbReference>
<dbReference type="InterPro" id="IPR004036">
    <property type="entry name" value="Endonuclease-III-like_CS2"/>
</dbReference>
<dbReference type="InterPro" id="IPR003651">
    <property type="entry name" value="Endonuclease3_FeS-loop_motif"/>
</dbReference>
<dbReference type="InterPro" id="IPR003265">
    <property type="entry name" value="HhH-GPD_domain"/>
</dbReference>
<dbReference type="InterPro" id="IPR023170">
    <property type="entry name" value="HhH_base_excis_C"/>
</dbReference>
<dbReference type="InterPro" id="IPR000445">
    <property type="entry name" value="HhH_motif"/>
</dbReference>
<dbReference type="InterPro" id="IPR030841">
    <property type="entry name" value="NTH1"/>
</dbReference>
<dbReference type="PANTHER" id="PTHR43286">
    <property type="entry name" value="ENDONUCLEASE III-LIKE PROTEIN 1"/>
    <property type="match status" value="1"/>
</dbReference>
<dbReference type="PANTHER" id="PTHR43286:SF1">
    <property type="entry name" value="ENDONUCLEASE III-LIKE PROTEIN 1"/>
    <property type="match status" value="1"/>
</dbReference>
<dbReference type="Pfam" id="PF00633">
    <property type="entry name" value="HHH"/>
    <property type="match status" value="1"/>
</dbReference>
<dbReference type="Pfam" id="PF00730">
    <property type="entry name" value="HhH-GPD"/>
    <property type="match status" value="1"/>
</dbReference>
<dbReference type="SMART" id="SM00478">
    <property type="entry name" value="ENDO3c"/>
    <property type="match status" value="1"/>
</dbReference>
<dbReference type="SMART" id="SM00525">
    <property type="entry name" value="FES"/>
    <property type="match status" value="1"/>
</dbReference>
<dbReference type="SUPFAM" id="SSF48150">
    <property type="entry name" value="DNA-glycosylase"/>
    <property type="match status" value="1"/>
</dbReference>
<dbReference type="PROSITE" id="PS01155">
    <property type="entry name" value="ENDONUCLEASE_III_2"/>
    <property type="match status" value="1"/>
</dbReference>
<reference key="1">
    <citation type="journal article" date="2000" name="Nature">
        <title>Sequence and analysis of chromosome 1 of the plant Arabidopsis thaliana.</title>
        <authorList>
            <person name="Theologis A."/>
            <person name="Ecker J.R."/>
            <person name="Palm C.J."/>
            <person name="Federspiel N.A."/>
            <person name="Kaul S."/>
            <person name="White O."/>
            <person name="Alonso J."/>
            <person name="Altafi H."/>
            <person name="Araujo R."/>
            <person name="Bowman C.L."/>
            <person name="Brooks S.Y."/>
            <person name="Buehler E."/>
            <person name="Chan A."/>
            <person name="Chao Q."/>
            <person name="Chen H."/>
            <person name="Cheuk R.F."/>
            <person name="Chin C.W."/>
            <person name="Chung M.K."/>
            <person name="Conn L."/>
            <person name="Conway A.B."/>
            <person name="Conway A.R."/>
            <person name="Creasy T.H."/>
            <person name="Dewar K."/>
            <person name="Dunn P."/>
            <person name="Etgu P."/>
            <person name="Feldblyum T.V."/>
            <person name="Feng J.-D."/>
            <person name="Fong B."/>
            <person name="Fujii C.Y."/>
            <person name="Gill J.E."/>
            <person name="Goldsmith A.D."/>
            <person name="Haas B."/>
            <person name="Hansen N.F."/>
            <person name="Hughes B."/>
            <person name="Huizar L."/>
            <person name="Hunter J.L."/>
            <person name="Jenkins J."/>
            <person name="Johnson-Hopson C."/>
            <person name="Khan S."/>
            <person name="Khaykin E."/>
            <person name="Kim C.J."/>
            <person name="Koo H.L."/>
            <person name="Kremenetskaia I."/>
            <person name="Kurtz D.B."/>
            <person name="Kwan A."/>
            <person name="Lam B."/>
            <person name="Langin-Hooper S."/>
            <person name="Lee A."/>
            <person name="Lee J.M."/>
            <person name="Lenz C.A."/>
            <person name="Li J.H."/>
            <person name="Li Y.-P."/>
            <person name="Lin X."/>
            <person name="Liu S.X."/>
            <person name="Liu Z.A."/>
            <person name="Luros J.S."/>
            <person name="Maiti R."/>
            <person name="Marziali A."/>
            <person name="Militscher J."/>
            <person name="Miranda M."/>
            <person name="Nguyen M."/>
            <person name="Nierman W.C."/>
            <person name="Osborne B.I."/>
            <person name="Pai G."/>
            <person name="Peterson J."/>
            <person name="Pham P.K."/>
            <person name="Rizzo M."/>
            <person name="Rooney T."/>
            <person name="Rowley D."/>
            <person name="Sakano H."/>
            <person name="Salzberg S.L."/>
            <person name="Schwartz J.R."/>
            <person name="Shinn P."/>
            <person name="Southwick A.M."/>
            <person name="Sun H."/>
            <person name="Tallon L.J."/>
            <person name="Tambunga G."/>
            <person name="Toriumi M.J."/>
            <person name="Town C.D."/>
            <person name="Utterback T."/>
            <person name="Van Aken S."/>
            <person name="Vaysberg M."/>
            <person name="Vysotskaia V.S."/>
            <person name="Walker M."/>
            <person name="Wu D."/>
            <person name="Yu G."/>
            <person name="Fraser C.M."/>
            <person name="Venter J.C."/>
            <person name="Davis R.W."/>
        </authorList>
    </citation>
    <scope>NUCLEOTIDE SEQUENCE [LARGE SCALE GENOMIC DNA]</scope>
    <source>
        <strain>cv. Columbia</strain>
    </source>
</reference>
<reference key="2">
    <citation type="journal article" date="2017" name="Plant J.">
        <title>Araport11: a complete reannotation of the Arabidopsis thaliana reference genome.</title>
        <authorList>
            <person name="Cheng C.Y."/>
            <person name="Krishnakumar V."/>
            <person name="Chan A.P."/>
            <person name="Thibaud-Nissen F."/>
            <person name="Schobel S."/>
            <person name="Town C.D."/>
        </authorList>
    </citation>
    <scope>GENOME REANNOTATION</scope>
    <source>
        <strain>cv. Columbia</strain>
    </source>
</reference>
<reference key="3">
    <citation type="journal article" date="2003" name="Science">
        <title>Empirical analysis of transcriptional activity in the Arabidopsis genome.</title>
        <authorList>
            <person name="Yamada K."/>
            <person name="Lim J."/>
            <person name="Dale J.M."/>
            <person name="Chen H."/>
            <person name="Shinn P."/>
            <person name="Palm C.J."/>
            <person name="Southwick A.M."/>
            <person name="Wu H.C."/>
            <person name="Kim C.J."/>
            <person name="Nguyen M."/>
            <person name="Pham P.K."/>
            <person name="Cheuk R.F."/>
            <person name="Karlin-Newmann G."/>
            <person name="Liu S.X."/>
            <person name="Lam B."/>
            <person name="Sakano H."/>
            <person name="Wu T."/>
            <person name="Yu G."/>
            <person name="Miranda M."/>
            <person name="Quach H.L."/>
            <person name="Tripp M."/>
            <person name="Chang C.H."/>
            <person name="Lee J.M."/>
            <person name="Toriumi M.J."/>
            <person name="Chan M.M."/>
            <person name="Tang C.C."/>
            <person name="Onodera C.S."/>
            <person name="Deng J.M."/>
            <person name="Akiyama K."/>
            <person name="Ansari Y."/>
            <person name="Arakawa T."/>
            <person name="Banh J."/>
            <person name="Banno F."/>
            <person name="Bowser L."/>
            <person name="Brooks S.Y."/>
            <person name="Carninci P."/>
            <person name="Chao Q."/>
            <person name="Choy N."/>
            <person name="Enju A."/>
            <person name="Goldsmith A.D."/>
            <person name="Gurjal M."/>
            <person name="Hansen N.F."/>
            <person name="Hayashizaki Y."/>
            <person name="Johnson-Hopson C."/>
            <person name="Hsuan V.W."/>
            <person name="Iida K."/>
            <person name="Karnes M."/>
            <person name="Khan S."/>
            <person name="Koesema E."/>
            <person name="Ishida J."/>
            <person name="Jiang P.X."/>
            <person name="Jones T."/>
            <person name="Kawai J."/>
            <person name="Kamiya A."/>
            <person name="Meyers C."/>
            <person name="Nakajima M."/>
            <person name="Narusaka M."/>
            <person name="Seki M."/>
            <person name="Sakurai T."/>
            <person name="Satou M."/>
            <person name="Tamse R."/>
            <person name="Vaysberg M."/>
            <person name="Wallender E.K."/>
            <person name="Wong C."/>
            <person name="Yamamura Y."/>
            <person name="Yuan S."/>
            <person name="Shinozaki K."/>
            <person name="Davis R.W."/>
            <person name="Theologis A."/>
            <person name="Ecker J.R."/>
        </authorList>
    </citation>
    <scope>NUCLEOTIDE SEQUENCE [LARGE SCALE MRNA] (ISOFORM 2)</scope>
    <source>
        <strain>cv. Columbia</strain>
    </source>
</reference>
<reference key="4">
    <citation type="journal article" date="2009" name="DNA Res.">
        <title>Analysis of multiple occurrences of alternative splicing events in Arabidopsis thaliana using novel sequenced full-length cDNAs.</title>
        <authorList>
            <person name="Iida K."/>
            <person name="Fukami-Kobayashi K."/>
            <person name="Toyoda A."/>
            <person name="Sakaki Y."/>
            <person name="Kobayashi M."/>
            <person name="Seki M."/>
            <person name="Shinozaki K."/>
        </authorList>
    </citation>
    <scope>NUCLEOTIDE SEQUENCE [LARGE SCALE MRNA] (ISOFORM 1)</scope>
    <source>
        <strain>cv. Columbia</strain>
        <tissue>Root</tissue>
    </source>
</reference>
<reference key="5">
    <citation type="journal article" date="2009" name="J. Biol. Chem.">
        <title>Evidence for base excision repair of oxidative DNA damage in chloroplasts of Arabidopsis thaliana.</title>
        <authorList>
            <person name="Gutman B.L."/>
            <person name="Niyogi K.K."/>
        </authorList>
    </citation>
    <scope>FUNCTION</scope>
    <scope>DISRUPTION PHENOTYPE</scope>
    <scope>SUBCELLULAR LOCATION</scope>
    <source>
        <strain>cv. Columbia</strain>
    </source>
</reference>
<organism>
    <name type="scientific">Arabidopsis thaliana</name>
    <name type="common">Mouse-ear cress</name>
    <dbReference type="NCBI Taxonomy" id="3702"/>
    <lineage>
        <taxon>Eukaryota</taxon>
        <taxon>Viridiplantae</taxon>
        <taxon>Streptophyta</taxon>
        <taxon>Embryophyta</taxon>
        <taxon>Tracheophyta</taxon>
        <taxon>Spermatophyta</taxon>
        <taxon>Magnoliopsida</taxon>
        <taxon>eudicotyledons</taxon>
        <taxon>Gunneridae</taxon>
        <taxon>Pentapetalae</taxon>
        <taxon>rosids</taxon>
        <taxon>malvids</taxon>
        <taxon>Brassicales</taxon>
        <taxon>Brassicaceae</taxon>
        <taxon>Camelineae</taxon>
        <taxon>Arabidopsis</taxon>
    </lineage>
</organism>
<feature type="transit peptide" description="Chloroplast" evidence="1">
    <location>
        <begin position="1"/>
        <end position="50"/>
    </location>
</feature>
<feature type="chain" id="PRO_0000426013" description="Endonuclease III homolog 2, chloroplastic">
    <location>
        <begin position="51"/>
        <end position="386"/>
    </location>
</feature>
<feature type="domain" description="HhH" evidence="2">
    <location>
        <begin position="252"/>
        <end position="278"/>
    </location>
</feature>
<feature type="region of interest" description="Disordered" evidence="3">
    <location>
        <begin position="44"/>
        <end position="66"/>
    </location>
</feature>
<feature type="active site" description="Nucleophile; for N-glycosylase activity" evidence="2">
    <location>
        <position position="272"/>
    </location>
</feature>
<feature type="binding site" evidence="2">
    <location>
        <position position="347"/>
    </location>
    <ligand>
        <name>[4Fe-4S] cluster</name>
        <dbReference type="ChEBI" id="CHEBI:49883"/>
    </ligand>
</feature>
<feature type="binding site" evidence="2">
    <location>
        <position position="354"/>
    </location>
    <ligand>
        <name>[4Fe-4S] cluster</name>
        <dbReference type="ChEBI" id="CHEBI:49883"/>
    </ligand>
</feature>
<feature type="binding site" evidence="2">
    <location>
        <position position="357"/>
    </location>
    <ligand>
        <name>[4Fe-4S] cluster</name>
        <dbReference type="ChEBI" id="CHEBI:49883"/>
    </ligand>
</feature>
<feature type="binding site" evidence="2">
    <location>
        <position position="363"/>
    </location>
    <ligand>
        <name>[4Fe-4S] cluster</name>
        <dbReference type="ChEBI" id="CHEBI:49883"/>
    </ligand>
</feature>
<feature type="site" description="Important for catalytic activity" evidence="2">
    <location>
        <position position="291"/>
    </location>
</feature>
<feature type="splice variant" id="VSP_053922" description="In isoform 2." evidence="5">
    <original>KTS</original>
    <variation>VLL</variation>
    <location>
        <begin position="312"/>
        <end position="314"/>
    </location>
</feature>
<feature type="splice variant" id="VSP_053923" description="In isoform 2." evidence="5">
    <location>
        <begin position="315"/>
        <end position="386"/>
    </location>
</feature>
<keyword id="KW-0004">4Fe-4S</keyword>
<keyword id="KW-0025">Alternative splicing</keyword>
<keyword id="KW-0150">Chloroplast</keyword>
<keyword id="KW-0227">DNA damage</keyword>
<keyword id="KW-0234">DNA repair</keyword>
<keyword id="KW-0326">Glycosidase</keyword>
<keyword id="KW-0378">Hydrolase</keyword>
<keyword id="KW-0408">Iron</keyword>
<keyword id="KW-0411">Iron-sulfur</keyword>
<keyword id="KW-0456">Lyase</keyword>
<keyword id="KW-0479">Metal-binding</keyword>
<keyword id="KW-0934">Plastid</keyword>
<keyword id="KW-1185">Reference proteome</keyword>
<keyword id="KW-0809">Transit peptide</keyword>
<accession>B9DFZ0</accession>
<accession>Q94EJ4</accession>
<accession>Q9MA35</accession>
<name>NTH2_ARATH</name>
<protein>
    <recommendedName>
        <fullName evidence="2">Endonuclease III homolog 2, chloroplastic</fullName>
        <shortName>AtNTH2</shortName>
        <ecNumber evidence="2">3.2.2.-</ecNumber>
        <ecNumber evidence="2">4.2.99.18</ecNumber>
    </recommendedName>
    <alternativeName>
        <fullName evidence="2">Bifunctional DNA N-glycosylase/DNA-(apurinic or apyrimidinic site) lyase 2</fullName>
        <shortName evidence="2">DNA glycosylase/AP lyase 2</shortName>
    </alternativeName>
</protein>
<gene>
    <name type="primary">NTH2</name>
    <name type="ordered locus">At1g05900</name>
    <name type="ORF">T20M3.18</name>
</gene>
<sequence length="386" mass="42415">MILTGAASTFPIVARVLNAMNRRMYAATTLSSAKSISAESLNLRSDSNSEAAHGASESETRVSLRKKRIKQDDLEPVKKCSARETKARKDMCGLPDIEDSPYKKTNGTASSRTRKLNSYIKSTEASPSASSIKTAGLGIPPENWEKVLEGIRKMKPSEEAPVNAVECDRTGSFLPPKERRFYVLIGTLLSSQTKEHITGAAVERLHQNGLLTPEAIDKADESTIKELIYPVGFYTRKATNVKKVAKICLMEYDGDIPRTLEELLSLPGVGPKIAHLVLHVAWNDVQGICVDTHVHRICNRLGWVSKPGTKQKTSSPEETRVALQQWLPKGEWVAINFLLVGFGQTICTPLRPHCGTCSITEICPSAFKETPSTSSKLKKSIKSKKL</sequence>